<accession>A0Q1A0</accession>
<keyword id="KW-0328">Glycosyltransferase</keyword>
<keyword id="KW-1185">Reference proteome</keyword>
<keyword id="KW-0808">Transferase</keyword>
<protein>
    <recommendedName>
        <fullName evidence="2">Purine nucleoside phosphorylase DeoD-type</fullName>
        <shortName evidence="2">PNP</shortName>
        <ecNumber evidence="2">2.4.2.1</ecNumber>
    </recommendedName>
</protein>
<dbReference type="EC" id="2.4.2.1" evidence="2"/>
<dbReference type="EMBL" id="CP000382">
    <property type="protein sequence ID" value="ABK60589.1"/>
    <property type="molecule type" value="Genomic_DNA"/>
</dbReference>
<dbReference type="RefSeq" id="WP_011722398.1">
    <property type="nucleotide sequence ID" value="NC_008593.1"/>
</dbReference>
<dbReference type="SMR" id="A0Q1A0"/>
<dbReference type="STRING" id="386415.NT01CX_2329"/>
<dbReference type="KEGG" id="cno:NT01CX_2329"/>
<dbReference type="eggNOG" id="COG0813">
    <property type="taxonomic scope" value="Bacteria"/>
</dbReference>
<dbReference type="HOGENOM" id="CLU_068457_2_0_9"/>
<dbReference type="Proteomes" id="UP000008220">
    <property type="component" value="Chromosome"/>
</dbReference>
<dbReference type="GO" id="GO:0005829">
    <property type="term" value="C:cytosol"/>
    <property type="evidence" value="ECO:0007669"/>
    <property type="project" value="TreeGrafter"/>
</dbReference>
<dbReference type="GO" id="GO:0004731">
    <property type="term" value="F:purine-nucleoside phosphorylase activity"/>
    <property type="evidence" value="ECO:0007669"/>
    <property type="project" value="UniProtKB-UniRule"/>
</dbReference>
<dbReference type="GO" id="GO:0006152">
    <property type="term" value="P:purine nucleoside catabolic process"/>
    <property type="evidence" value="ECO:0007669"/>
    <property type="project" value="TreeGrafter"/>
</dbReference>
<dbReference type="CDD" id="cd09006">
    <property type="entry name" value="PNP_EcPNPI-like"/>
    <property type="match status" value="1"/>
</dbReference>
<dbReference type="Gene3D" id="3.40.50.1580">
    <property type="entry name" value="Nucleoside phosphorylase domain"/>
    <property type="match status" value="1"/>
</dbReference>
<dbReference type="HAMAP" id="MF_01627">
    <property type="entry name" value="Pur_nucleosid_phosp"/>
    <property type="match status" value="1"/>
</dbReference>
<dbReference type="InterPro" id="IPR004402">
    <property type="entry name" value="DeoD-type"/>
</dbReference>
<dbReference type="InterPro" id="IPR018016">
    <property type="entry name" value="Nucleoside_phosphorylase_CS"/>
</dbReference>
<dbReference type="InterPro" id="IPR000845">
    <property type="entry name" value="Nucleoside_phosphorylase_d"/>
</dbReference>
<dbReference type="InterPro" id="IPR035994">
    <property type="entry name" value="Nucleoside_phosphorylase_sf"/>
</dbReference>
<dbReference type="NCBIfam" id="TIGR00107">
    <property type="entry name" value="deoD"/>
    <property type="match status" value="1"/>
</dbReference>
<dbReference type="NCBIfam" id="NF004489">
    <property type="entry name" value="PRK05819.1"/>
    <property type="match status" value="1"/>
</dbReference>
<dbReference type="NCBIfam" id="NF009914">
    <property type="entry name" value="PRK13374.1"/>
    <property type="match status" value="1"/>
</dbReference>
<dbReference type="PANTHER" id="PTHR43691:SF11">
    <property type="entry name" value="FI09636P-RELATED"/>
    <property type="match status" value="1"/>
</dbReference>
<dbReference type="PANTHER" id="PTHR43691">
    <property type="entry name" value="URIDINE PHOSPHORYLASE"/>
    <property type="match status" value="1"/>
</dbReference>
<dbReference type="Pfam" id="PF01048">
    <property type="entry name" value="PNP_UDP_1"/>
    <property type="match status" value="1"/>
</dbReference>
<dbReference type="SUPFAM" id="SSF53167">
    <property type="entry name" value="Purine and uridine phosphorylases"/>
    <property type="match status" value="1"/>
</dbReference>
<dbReference type="PROSITE" id="PS01232">
    <property type="entry name" value="PNP_UDP_1"/>
    <property type="match status" value="1"/>
</dbReference>
<sequence>MSTHIGAKQNEIASTVLLPGDPLRAKFIAENFLEDVICYNDVRGMYGYTGTYKGKRVSVQGTGMGIPSISIYANELIESYGVKNLIRVGTCGSINKDIKVRDIILAMGACTNSGTNRMRFNGMDFAPIASFDLLKKAYDIGKSKGLDIKVGNILSSDLFYNDDKDAIKLWSKYGVLGIEMEASGLYTLGAKYGVNTLAILTVSDSIVTGEETTAKERETTFTKMMEIALELAE</sequence>
<organism>
    <name type="scientific">Clostridium novyi (strain NT)</name>
    <dbReference type="NCBI Taxonomy" id="386415"/>
    <lineage>
        <taxon>Bacteria</taxon>
        <taxon>Bacillati</taxon>
        <taxon>Bacillota</taxon>
        <taxon>Clostridia</taxon>
        <taxon>Eubacteriales</taxon>
        <taxon>Clostridiaceae</taxon>
        <taxon>Clostridium</taxon>
    </lineage>
</organism>
<name>DEOD_CLONN</name>
<proteinExistence type="inferred from homology"/>
<evidence type="ECO:0000250" key="1">
    <source>
        <dbReference type="UniProtKB" id="P50389"/>
    </source>
</evidence>
<evidence type="ECO:0000255" key="2">
    <source>
        <dbReference type="HAMAP-Rule" id="MF_01627"/>
    </source>
</evidence>
<gene>
    <name evidence="2" type="primary">deoD</name>
    <name type="ordered locus">NT01CX_2329</name>
</gene>
<comment type="function">
    <text evidence="2">Catalyzes the reversible phosphorolytic breakdown of the N-glycosidic bond in the beta-(deoxy)ribonucleoside molecules, with the formation of the corresponding free purine bases and pentose-1-phosphate.</text>
</comment>
<comment type="catalytic activity">
    <reaction evidence="2">
        <text>a purine D-ribonucleoside + phosphate = a purine nucleobase + alpha-D-ribose 1-phosphate</text>
        <dbReference type="Rhea" id="RHEA:19805"/>
        <dbReference type="ChEBI" id="CHEBI:26386"/>
        <dbReference type="ChEBI" id="CHEBI:43474"/>
        <dbReference type="ChEBI" id="CHEBI:57720"/>
        <dbReference type="ChEBI" id="CHEBI:142355"/>
        <dbReference type="EC" id="2.4.2.1"/>
    </reaction>
</comment>
<comment type="catalytic activity">
    <reaction evidence="2">
        <text>a purine 2'-deoxy-D-ribonucleoside + phosphate = a purine nucleobase + 2-deoxy-alpha-D-ribose 1-phosphate</text>
        <dbReference type="Rhea" id="RHEA:36431"/>
        <dbReference type="ChEBI" id="CHEBI:26386"/>
        <dbReference type="ChEBI" id="CHEBI:43474"/>
        <dbReference type="ChEBI" id="CHEBI:57259"/>
        <dbReference type="ChEBI" id="CHEBI:142361"/>
        <dbReference type="EC" id="2.4.2.1"/>
    </reaction>
</comment>
<comment type="subunit">
    <text evidence="2">Homohexamer; trimer of homodimers.</text>
</comment>
<comment type="similarity">
    <text evidence="2">Belongs to the PNP/UDP phosphorylase family.</text>
</comment>
<feature type="chain" id="PRO_1000069621" description="Purine nucleoside phosphorylase DeoD-type">
    <location>
        <begin position="1"/>
        <end position="233"/>
    </location>
</feature>
<feature type="active site" description="Proton donor" evidence="2">
    <location>
        <position position="204"/>
    </location>
</feature>
<feature type="binding site" evidence="1">
    <location>
        <position position="4"/>
    </location>
    <ligand>
        <name>a purine D-ribonucleoside</name>
        <dbReference type="ChEBI" id="CHEBI:142355"/>
        <note>ligand shared between dimeric partners</note>
    </ligand>
</feature>
<feature type="binding site" description="in other chain" evidence="1">
    <location>
        <position position="20"/>
    </location>
    <ligand>
        <name>phosphate</name>
        <dbReference type="ChEBI" id="CHEBI:43474"/>
        <note>ligand shared between dimeric partners</note>
    </ligand>
</feature>
<feature type="binding site" description="in other chain" evidence="1">
    <location>
        <position position="24"/>
    </location>
    <ligand>
        <name>phosphate</name>
        <dbReference type="ChEBI" id="CHEBI:43474"/>
        <note>ligand shared between dimeric partners</note>
    </ligand>
</feature>
<feature type="binding site" evidence="1">
    <location>
        <position position="43"/>
    </location>
    <ligand>
        <name>phosphate</name>
        <dbReference type="ChEBI" id="CHEBI:43474"/>
        <note>ligand shared between dimeric partners</note>
    </ligand>
</feature>
<feature type="binding site" description="in other chain" evidence="1">
    <location>
        <begin position="87"/>
        <end position="90"/>
    </location>
    <ligand>
        <name>phosphate</name>
        <dbReference type="ChEBI" id="CHEBI:43474"/>
        <note>ligand shared between dimeric partners</note>
    </ligand>
</feature>
<feature type="binding site" description="in other chain" evidence="1">
    <location>
        <begin position="179"/>
        <end position="181"/>
    </location>
    <ligand>
        <name>a purine D-ribonucleoside</name>
        <dbReference type="ChEBI" id="CHEBI:142355"/>
        <note>ligand shared between dimeric partners</note>
    </ligand>
</feature>
<feature type="binding site" description="in other chain" evidence="1">
    <location>
        <begin position="203"/>
        <end position="204"/>
    </location>
    <ligand>
        <name>a purine D-ribonucleoside</name>
        <dbReference type="ChEBI" id="CHEBI:142355"/>
        <note>ligand shared between dimeric partners</note>
    </ligand>
</feature>
<feature type="site" description="Important for catalytic activity" evidence="2">
    <location>
        <position position="217"/>
    </location>
</feature>
<reference key="1">
    <citation type="journal article" date="2006" name="Nat. Biotechnol.">
        <title>The genome and transcriptomes of the anti-tumor agent Clostridium novyi-NT.</title>
        <authorList>
            <person name="Bettegowda C."/>
            <person name="Huang X."/>
            <person name="Lin J."/>
            <person name="Cheong I."/>
            <person name="Kohli M."/>
            <person name="Szabo S.A."/>
            <person name="Zhang X."/>
            <person name="Diaz L.A. Jr."/>
            <person name="Velculescu V.E."/>
            <person name="Parmigiani G."/>
            <person name="Kinzler K.W."/>
            <person name="Vogelstein B."/>
            <person name="Zhou S."/>
        </authorList>
    </citation>
    <scope>NUCLEOTIDE SEQUENCE [LARGE SCALE GENOMIC DNA]</scope>
    <source>
        <strain>NT</strain>
    </source>
</reference>